<name>TAF4_CANAL</name>
<keyword id="KW-0175">Coiled coil</keyword>
<keyword id="KW-0539">Nucleus</keyword>
<keyword id="KW-1185">Reference proteome</keyword>
<keyword id="KW-0804">Transcription</keyword>
<keyword id="KW-0805">Transcription regulation</keyword>
<protein>
    <recommendedName>
        <fullName>Transcription initiation factor TFIID subunit 4</fullName>
    </recommendedName>
    <alternativeName>
        <fullName>TBP-associated factor 4</fullName>
    </alternativeName>
</protein>
<feature type="chain" id="PRO_0000343437" description="Transcription initiation factor TFIID subunit 4">
    <location>
        <begin position="1"/>
        <end position="363"/>
    </location>
</feature>
<feature type="domain" description="Histone-fold">
    <location>
        <begin position="141"/>
        <end position="216"/>
    </location>
</feature>
<feature type="region of interest" description="Disordered" evidence="3">
    <location>
        <begin position="1"/>
        <end position="84"/>
    </location>
</feature>
<feature type="region of interest" description="Disordered" evidence="3">
    <location>
        <begin position="230"/>
        <end position="259"/>
    </location>
</feature>
<feature type="region of interest" description="Disordered" evidence="3">
    <location>
        <begin position="292"/>
        <end position="318"/>
    </location>
</feature>
<feature type="coiled-coil region" evidence="2">
    <location>
        <begin position="207"/>
        <end position="232"/>
    </location>
</feature>
<feature type="compositionally biased region" description="Polar residues" evidence="3">
    <location>
        <begin position="1"/>
        <end position="12"/>
    </location>
</feature>
<feature type="compositionally biased region" description="Low complexity" evidence="3">
    <location>
        <begin position="21"/>
        <end position="39"/>
    </location>
</feature>
<feature type="compositionally biased region" description="Basic and acidic residues" evidence="3">
    <location>
        <begin position="239"/>
        <end position="259"/>
    </location>
</feature>
<feature type="compositionally biased region" description="Low complexity" evidence="3">
    <location>
        <begin position="296"/>
        <end position="305"/>
    </location>
</feature>
<comment type="function">
    <text evidence="1">Functions as a component of the DNA-binding general transcription factor complex TFIID. Binding of TFIID to a promoter (with or without TATA element) is the initial step in pre-initiation complex (PIC) formation. TFIID plays a key role in the regulation of gene expression by RNA polymerase II through different activities such as transcription activator interaction, core promoter recognition and selectivity, TFIIA and TFIIB interaction, chromatin modification (histone acetylation by TAF1), facilitation of DNA opening and initiation of transcription (By similarity).</text>
</comment>
<comment type="subunit">
    <text evidence="1">The 1.2 MDa TFIID complex is composed of TATA binding protein (TBP) and the 14 TBP-associated factors.</text>
</comment>
<comment type="subcellular location">
    <subcellularLocation>
        <location evidence="1">Nucleus</location>
    </subcellularLocation>
</comment>
<comment type="similarity">
    <text evidence="4">Belongs to the TAF4 family.</text>
</comment>
<gene>
    <name type="primary">TAF4</name>
    <name type="ordered locus">CAALFM_C207460WA</name>
    <name type="ORF">CaO19.1885</name>
    <name type="ORF">CaO19.9441</name>
</gene>
<accession>Q59U67</accession>
<accession>A0A1D8PHX9</accession>
<proteinExistence type="inferred from homology"/>
<reference key="1">
    <citation type="journal article" date="2004" name="Proc. Natl. Acad. Sci. U.S.A.">
        <title>The diploid genome sequence of Candida albicans.</title>
        <authorList>
            <person name="Jones T."/>
            <person name="Federspiel N.A."/>
            <person name="Chibana H."/>
            <person name="Dungan J."/>
            <person name="Kalman S."/>
            <person name="Magee B.B."/>
            <person name="Newport G."/>
            <person name="Thorstenson Y.R."/>
            <person name="Agabian N."/>
            <person name="Magee P.T."/>
            <person name="Davis R.W."/>
            <person name="Scherer S."/>
        </authorList>
    </citation>
    <scope>NUCLEOTIDE SEQUENCE [LARGE SCALE GENOMIC DNA]</scope>
    <source>
        <strain>SC5314 / ATCC MYA-2876</strain>
    </source>
</reference>
<reference key="2">
    <citation type="journal article" date="2007" name="Genome Biol.">
        <title>Assembly of the Candida albicans genome into sixteen supercontigs aligned on the eight chromosomes.</title>
        <authorList>
            <person name="van het Hoog M."/>
            <person name="Rast T.J."/>
            <person name="Martchenko M."/>
            <person name="Grindle S."/>
            <person name="Dignard D."/>
            <person name="Hogues H."/>
            <person name="Cuomo C."/>
            <person name="Berriman M."/>
            <person name="Scherer S."/>
            <person name="Magee B.B."/>
            <person name="Whiteway M."/>
            <person name="Chibana H."/>
            <person name="Nantel A."/>
            <person name="Magee P.T."/>
        </authorList>
    </citation>
    <scope>GENOME REANNOTATION</scope>
    <source>
        <strain>SC5314 / ATCC MYA-2876</strain>
    </source>
</reference>
<reference key="3">
    <citation type="journal article" date="2013" name="Genome Biol.">
        <title>Assembly of a phased diploid Candida albicans genome facilitates allele-specific measurements and provides a simple model for repeat and indel structure.</title>
        <authorList>
            <person name="Muzzey D."/>
            <person name="Schwartz K."/>
            <person name="Weissman J.S."/>
            <person name="Sherlock G."/>
        </authorList>
    </citation>
    <scope>NUCLEOTIDE SEQUENCE [LARGE SCALE GENOMIC DNA]</scope>
    <scope>GENOME REANNOTATION</scope>
    <source>
        <strain>SC5314 / ATCC MYA-2876</strain>
    </source>
</reference>
<evidence type="ECO:0000250" key="1"/>
<evidence type="ECO:0000255" key="2"/>
<evidence type="ECO:0000256" key="3">
    <source>
        <dbReference type="SAM" id="MobiDB-lite"/>
    </source>
</evidence>
<evidence type="ECO:0000305" key="4"/>
<dbReference type="EMBL" id="CP017624">
    <property type="protein sequence ID" value="AOW27744.1"/>
    <property type="molecule type" value="Genomic_DNA"/>
</dbReference>
<dbReference type="RefSeq" id="XP_713142.2">
    <property type="nucleotide sequence ID" value="XM_708049.2"/>
</dbReference>
<dbReference type="FunCoup" id="Q59U67">
    <property type="interactions" value="355"/>
</dbReference>
<dbReference type="STRING" id="237561.Q59U67"/>
<dbReference type="EnsemblFungi" id="C2_07460W_A-T">
    <property type="protein sequence ID" value="C2_07460W_A-T-p1"/>
    <property type="gene ID" value="C2_07460W_A"/>
</dbReference>
<dbReference type="GeneID" id="3645198"/>
<dbReference type="KEGG" id="cal:CAALFM_C207460WA"/>
<dbReference type="CGD" id="CAL0000193600">
    <property type="gene designation" value="TAF4"/>
</dbReference>
<dbReference type="VEuPathDB" id="FungiDB:C2_07460W_A"/>
<dbReference type="eggNOG" id="KOG2341">
    <property type="taxonomic scope" value="Eukaryota"/>
</dbReference>
<dbReference type="HOGENOM" id="CLU_036634_1_0_1"/>
<dbReference type="InParanoid" id="Q59U67"/>
<dbReference type="OrthoDB" id="21060at2759"/>
<dbReference type="PRO" id="PR:Q59U67"/>
<dbReference type="Proteomes" id="UP000000559">
    <property type="component" value="Chromosome 2"/>
</dbReference>
<dbReference type="GO" id="GO:0005669">
    <property type="term" value="C:transcription factor TFIID complex"/>
    <property type="evidence" value="ECO:0000318"/>
    <property type="project" value="GO_Central"/>
</dbReference>
<dbReference type="GO" id="GO:0003677">
    <property type="term" value="F:DNA binding"/>
    <property type="evidence" value="ECO:0000318"/>
    <property type="project" value="GO_Central"/>
</dbReference>
<dbReference type="GO" id="GO:0006367">
    <property type="term" value="P:transcription initiation at RNA polymerase II promoter"/>
    <property type="evidence" value="ECO:0000318"/>
    <property type="project" value="GO_Central"/>
</dbReference>
<dbReference type="CDD" id="cd08045">
    <property type="entry name" value="HFD_TAF4"/>
    <property type="match status" value="1"/>
</dbReference>
<dbReference type="InterPro" id="IPR045144">
    <property type="entry name" value="TAF4"/>
</dbReference>
<dbReference type="InterPro" id="IPR007900">
    <property type="entry name" value="TAF4_C"/>
</dbReference>
<dbReference type="PANTHER" id="PTHR15138">
    <property type="entry name" value="TRANSCRIPTION INITIATION FACTOR TFIID SUBUNIT 4"/>
    <property type="match status" value="1"/>
</dbReference>
<dbReference type="PANTHER" id="PTHR15138:SF14">
    <property type="entry name" value="TRANSCRIPTION INITIATION FACTOR TFIID SUBUNIT 4"/>
    <property type="match status" value="1"/>
</dbReference>
<dbReference type="Pfam" id="PF05236">
    <property type="entry name" value="TAF4"/>
    <property type="match status" value="1"/>
</dbReference>
<sequence length="363" mass="39591">MTSTPQESSNLKRQLENSEDSSSPNKKSKTETTTENQSSWESDFNSLPVELLQTETNGTSPAPAPATPIDTTNVSNSKERDQDTSKLNDAIAAAGVDIQQEEEILLQQQLNRKSAEGMASNLKSVIRSSKSPPFLHNYHLAAFIDKVAKQNGIQQNFLMDGEMLELISAACETWLSNLATKTIILSRHRRRGIPVINKKSGSSSVPRSEISKELRSLALKQKEMEEKRVNKRVMLGLEKSTKDASKNDENGESKAGAEETLHRAANATAAMMTMNPGRKKYSWMTSSATAGGGSDFGKSSGGSSKDSGKHQSPIISVRGDNGLRFREIRSGNSIIMKDLLGAIEDEKMGTRNAVIKGYAKLKD</sequence>
<organism>
    <name type="scientific">Candida albicans (strain SC5314 / ATCC MYA-2876)</name>
    <name type="common">Yeast</name>
    <dbReference type="NCBI Taxonomy" id="237561"/>
    <lineage>
        <taxon>Eukaryota</taxon>
        <taxon>Fungi</taxon>
        <taxon>Dikarya</taxon>
        <taxon>Ascomycota</taxon>
        <taxon>Saccharomycotina</taxon>
        <taxon>Pichiomycetes</taxon>
        <taxon>Debaryomycetaceae</taxon>
        <taxon>Candida/Lodderomyces clade</taxon>
        <taxon>Candida</taxon>
    </lineage>
</organism>